<feature type="chain" id="PRO_0000311361" description="Sterile alpha motif domain-containing protein 5">
    <location>
        <begin position="1"/>
        <end position="173"/>
    </location>
</feature>
<feature type="domain" description="SAM" evidence="2">
    <location>
        <begin position="1"/>
        <end position="65"/>
    </location>
</feature>
<feature type="region of interest" description="Disordered" evidence="3">
    <location>
        <begin position="75"/>
        <end position="119"/>
    </location>
</feature>
<feature type="compositionally biased region" description="Pro residues" evidence="3">
    <location>
        <begin position="79"/>
        <end position="88"/>
    </location>
</feature>
<name>SAMD5_HUMAN</name>
<protein>
    <recommendedName>
        <fullName>Sterile alpha motif domain-containing protein 5</fullName>
        <shortName>SAM domain-containing protein 5</shortName>
    </recommendedName>
</protein>
<proteinExistence type="evidence at protein level"/>
<reference key="1">
    <citation type="journal article" date="2003" name="Nature">
        <title>The DNA sequence and analysis of human chromosome 6.</title>
        <authorList>
            <person name="Mungall A.J."/>
            <person name="Palmer S.A."/>
            <person name="Sims S.K."/>
            <person name="Edwards C.A."/>
            <person name="Ashurst J.L."/>
            <person name="Wilming L."/>
            <person name="Jones M.C."/>
            <person name="Horton R."/>
            <person name="Hunt S.E."/>
            <person name="Scott C.E."/>
            <person name="Gilbert J.G.R."/>
            <person name="Clamp M.E."/>
            <person name="Bethel G."/>
            <person name="Milne S."/>
            <person name="Ainscough R."/>
            <person name="Almeida J.P."/>
            <person name="Ambrose K.D."/>
            <person name="Andrews T.D."/>
            <person name="Ashwell R.I.S."/>
            <person name="Babbage A.K."/>
            <person name="Bagguley C.L."/>
            <person name="Bailey J."/>
            <person name="Banerjee R."/>
            <person name="Barker D.J."/>
            <person name="Barlow K.F."/>
            <person name="Bates K."/>
            <person name="Beare D.M."/>
            <person name="Beasley H."/>
            <person name="Beasley O."/>
            <person name="Bird C.P."/>
            <person name="Blakey S.E."/>
            <person name="Bray-Allen S."/>
            <person name="Brook J."/>
            <person name="Brown A.J."/>
            <person name="Brown J.Y."/>
            <person name="Burford D.C."/>
            <person name="Burrill W."/>
            <person name="Burton J."/>
            <person name="Carder C."/>
            <person name="Carter N.P."/>
            <person name="Chapman J.C."/>
            <person name="Clark S.Y."/>
            <person name="Clark G."/>
            <person name="Clee C.M."/>
            <person name="Clegg S."/>
            <person name="Cobley V."/>
            <person name="Collier R.E."/>
            <person name="Collins J.E."/>
            <person name="Colman L.K."/>
            <person name="Corby N.R."/>
            <person name="Coville G.J."/>
            <person name="Culley K.M."/>
            <person name="Dhami P."/>
            <person name="Davies J."/>
            <person name="Dunn M."/>
            <person name="Earthrowl M.E."/>
            <person name="Ellington A.E."/>
            <person name="Evans K.A."/>
            <person name="Faulkner L."/>
            <person name="Francis M.D."/>
            <person name="Frankish A."/>
            <person name="Frankland J."/>
            <person name="French L."/>
            <person name="Garner P."/>
            <person name="Garnett J."/>
            <person name="Ghori M.J."/>
            <person name="Gilby L.M."/>
            <person name="Gillson C.J."/>
            <person name="Glithero R.J."/>
            <person name="Grafham D.V."/>
            <person name="Grant M."/>
            <person name="Gribble S."/>
            <person name="Griffiths C."/>
            <person name="Griffiths M.N.D."/>
            <person name="Hall R."/>
            <person name="Halls K.S."/>
            <person name="Hammond S."/>
            <person name="Harley J.L."/>
            <person name="Hart E.A."/>
            <person name="Heath P.D."/>
            <person name="Heathcott R."/>
            <person name="Holmes S.J."/>
            <person name="Howden P.J."/>
            <person name="Howe K.L."/>
            <person name="Howell G.R."/>
            <person name="Huckle E."/>
            <person name="Humphray S.J."/>
            <person name="Humphries M.D."/>
            <person name="Hunt A.R."/>
            <person name="Johnson C.M."/>
            <person name="Joy A.A."/>
            <person name="Kay M."/>
            <person name="Keenan S.J."/>
            <person name="Kimberley A.M."/>
            <person name="King A."/>
            <person name="Laird G.K."/>
            <person name="Langford C."/>
            <person name="Lawlor S."/>
            <person name="Leongamornlert D.A."/>
            <person name="Leversha M."/>
            <person name="Lloyd C.R."/>
            <person name="Lloyd D.M."/>
            <person name="Loveland J.E."/>
            <person name="Lovell J."/>
            <person name="Martin S."/>
            <person name="Mashreghi-Mohammadi M."/>
            <person name="Maslen G.L."/>
            <person name="Matthews L."/>
            <person name="McCann O.T."/>
            <person name="McLaren S.J."/>
            <person name="McLay K."/>
            <person name="McMurray A."/>
            <person name="Moore M.J.F."/>
            <person name="Mullikin J.C."/>
            <person name="Niblett D."/>
            <person name="Nickerson T."/>
            <person name="Novik K.L."/>
            <person name="Oliver K."/>
            <person name="Overton-Larty E.K."/>
            <person name="Parker A."/>
            <person name="Patel R."/>
            <person name="Pearce A.V."/>
            <person name="Peck A.I."/>
            <person name="Phillimore B.J.C.T."/>
            <person name="Phillips S."/>
            <person name="Plumb R.W."/>
            <person name="Porter K.M."/>
            <person name="Ramsey Y."/>
            <person name="Ranby S.A."/>
            <person name="Rice C.M."/>
            <person name="Ross M.T."/>
            <person name="Searle S.M."/>
            <person name="Sehra H.K."/>
            <person name="Sheridan E."/>
            <person name="Skuce C.D."/>
            <person name="Smith S."/>
            <person name="Smith M."/>
            <person name="Spraggon L."/>
            <person name="Squares S.L."/>
            <person name="Steward C.A."/>
            <person name="Sycamore N."/>
            <person name="Tamlyn-Hall G."/>
            <person name="Tester J."/>
            <person name="Theaker A.J."/>
            <person name="Thomas D.W."/>
            <person name="Thorpe A."/>
            <person name="Tracey A."/>
            <person name="Tromans A."/>
            <person name="Tubby B."/>
            <person name="Wall M."/>
            <person name="Wallis J.M."/>
            <person name="West A.P."/>
            <person name="White S.S."/>
            <person name="Whitehead S.L."/>
            <person name="Whittaker H."/>
            <person name="Wild A."/>
            <person name="Willey D.J."/>
            <person name="Wilmer T.E."/>
            <person name="Wood J.M."/>
            <person name="Wray P.W."/>
            <person name="Wyatt J.C."/>
            <person name="Young L."/>
            <person name="Younger R.M."/>
            <person name="Bentley D.R."/>
            <person name="Coulson A."/>
            <person name="Durbin R.M."/>
            <person name="Hubbard T."/>
            <person name="Sulston J.E."/>
            <person name="Dunham I."/>
            <person name="Rogers J."/>
            <person name="Beck S."/>
        </authorList>
    </citation>
    <scope>NUCLEOTIDE SEQUENCE [LARGE SCALE GENOMIC DNA]</scope>
</reference>
<reference key="2">
    <citation type="journal article" date="2017" name="PLoS ONE">
        <title>Expression and localization of sterile alpha motif domain containing 5 is associated with cell type and malignancy of biliary tree.</title>
        <authorList>
            <person name="Yagai T."/>
            <person name="Matsui S."/>
            <person name="Harada K."/>
            <person name="Inagaki F.F."/>
            <person name="Saijou E."/>
            <person name="Miura Y."/>
            <person name="Nakanuma Y."/>
            <person name="Miyajima A."/>
            <person name="Tanaka M."/>
        </authorList>
    </citation>
    <scope>SUBCELLULAR LOCATION</scope>
    <scope>TISSUE SPECIFICITY</scope>
</reference>
<accession>Q5TGI4</accession>
<organism>
    <name type="scientific">Homo sapiens</name>
    <name type="common">Human</name>
    <dbReference type="NCBI Taxonomy" id="9606"/>
    <lineage>
        <taxon>Eukaryota</taxon>
        <taxon>Metazoa</taxon>
        <taxon>Chordata</taxon>
        <taxon>Craniata</taxon>
        <taxon>Vertebrata</taxon>
        <taxon>Euteleostomi</taxon>
        <taxon>Mammalia</taxon>
        <taxon>Eutheria</taxon>
        <taxon>Euarchontoglires</taxon>
        <taxon>Primates</taxon>
        <taxon>Haplorrhini</taxon>
        <taxon>Catarrhini</taxon>
        <taxon>Hominidae</taxon>
        <taxon>Homo</taxon>
    </lineage>
</organism>
<comment type="subunit">
    <text evidence="1">Interacts promiscuously (via SAM domain) with EPHA5, EPHA6, EPHA7, EPHA8, EPHB1, EPHB2, EPHB3 and EPHB4 (via SAM domain) (in vitro).</text>
</comment>
<comment type="subcellular location">
    <subcellularLocation>
        <location evidence="4">Cytoplasm</location>
    </subcellularLocation>
</comment>
<comment type="tissue specificity">
    <text evidence="4">Detected in biliary epithelial cells on bile ducts at the hepatic hilum (at protein level).</text>
</comment>
<sequence length="173" mass="19231">MCTNIVYEWLKALQLPQYAESFVDNGYDDLEVCKQIGDPDLDAIGVLAPAHRRRILEAVRRLREQDANAAGLYFTLEPQPAPPGPPADAVPTGRRGEPCGGPAQGTRGDSRGHTTAPRSRELVSYPKLKLKIMIRDKLVRDGIHLSKPPYSRKVPMAGILEYLMNWPKSSQSR</sequence>
<gene>
    <name type="primary">SAMD5</name>
    <name type="synonym">SAMDC1</name>
</gene>
<dbReference type="EMBL" id="AL354880">
    <property type="status" value="NOT_ANNOTATED_CDS"/>
    <property type="molecule type" value="Genomic_DNA"/>
</dbReference>
<dbReference type="EMBL" id="AL034350">
    <property type="status" value="NOT_ANNOTATED_CDS"/>
    <property type="molecule type" value="Genomic_DNA"/>
</dbReference>
<dbReference type="CCDS" id="CCDS34548.1"/>
<dbReference type="RefSeq" id="NP_001025231.1">
    <property type="nucleotide sequence ID" value="NM_001030060.3"/>
</dbReference>
<dbReference type="SMR" id="Q5TGI4"/>
<dbReference type="BioGRID" id="133149">
    <property type="interactions" value="1"/>
</dbReference>
<dbReference type="FunCoup" id="Q5TGI4">
    <property type="interactions" value="485"/>
</dbReference>
<dbReference type="STRING" id="9606.ENSP00000356444"/>
<dbReference type="iPTMnet" id="Q5TGI4"/>
<dbReference type="PhosphoSitePlus" id="Q5TGI4"/>
<dbReference type="BioMuta" id="SAMD5"/>
<dbReference type="DMDM" id="74746493"/>
<dbReference type="MassIVE" id="Q5TGI4"/>
<dbReference type="PaxDb" id="9606-ENSP00000356444"/>
<dbReference type="PeptideAtlas" id="Q5TGI4"/>
<dbReference type="Antibodypedia" id="74954">
    <property type="antibodies" value="5 antibodies from 5 providers"/>
</dbReference>
<dbReference type="DNASU" id="389432"/>
<dbReference type="Ensembl" id="ENST00000367474.2">
    <property type="protein sequence ID" value="ENSP00000356444.1"/>
    <property type="gene ID" value="ENSG00000203727.4"/>
</dbReference>
<dbReference type="GeneID" id="389432"/>
<dbReference type="KEGG" id="hsa:389432"/>
<dbReference type="MANE-Select" id="ENST00000367474.2">
    <property type="protein sequence ID" value="ENSP00000356444.1"/>
    <property type="RefSeq nucleotide sequence ID" value="NM_001030060.3"/>
    <property type="RefSeq protein sequence ID" value="NP_001025231.1"/>
</dbReference>
<dbReference type="UCSC" id="uc003qmc.3">
    <property type="organism name" value="human"/>
</dbReference>
<dbReference type="AGR" id="HGNC:21180"/>
<dbReference type="CTD" id="389432"/>
<dbReference type="DisGeNET" id="389432"/>
<dbReference type="GeneCards" id="SAMD5"/>
<dbReference type="HGNC" id="HGNC:21180">
    <property type="gene designation" value="SAMD5"/>
</dbReference>
<dbReference type="HPA" id="ENSG00000203727">
    <property type="expression patterns" value="Low tissue specificity"/>
</dbReference>
<dbReference type="MIM" id="620517">
    <property type="type" value="gene"/>
</dbReference>
<dbReference type="neXtProt" id="NX_Q5TGI4"/>
<dbReference type="OpenTargets" id="ENSG00000203727"/>
<dbReference type="PharmGKB" id="PA134888862"/>
<dbReference type="VEuPathDB" id="HostDB:ENSG00000203727"/>
<dbReference type="eggNOG" id="KOG4384">
    <property type="taxonomic scope" value="Eukaryota"/>
</dbReference>
<dbReference type="GeneTree" id="ENSGT00510000048701"/>
<dbReference type="HOGENOM" id="CLU_115568_1_0_1"/>
<dbReference type="InParanoid" id="Q5TGI4"/>
<dbReference type="OMA" id="LEFLMNW"/>
<dbReference type="OrthoDB" id="1919336at2759"/>
<dbReference type="PAN-GO" id="Q5TGI4">
    <property type="GO annotations" value="0 GO annotations based on evolutionary models"/>
</dbReference>
<dbReference type="PhylomeDB" id="Q5TGI4"/>
<dbReference type="TreeFam" id="TF339222"/>
<dbReference type="PathwayCommons" id="Q5TGI4"/>
<dbReference type="SignaLink" id="Q5TGI4"/>
<dbReference type="BioGRID-ORCS" id="389432">
    <property type="hits" value="17 hits in 1147 CRISPR screens"/>
</dbReference>
<dbReference type="ChiTaRS" id="SAMD5">
    <property type="organism name" value="human"/>
</dbReference>
<dbReference type="GenomeRNAi" id="389432"/>
<dbReference type="Pharos" id="Q5TGI4">
    <property type="development level" value="Tdark"/>
</dbReference>
<dbReference type="PRO" id="PR:Q5TGI4"/>
<dbReference type="Proteomes" id="UP000005640">
    <property type="component" value="Chromosome 6"/>
</dbReference>
<dbReference type="RNAct" id="Q5TGI4">
    <property type="molecule type" value="protein"/>
</dbReference>
<dbReference type="Bgee" id="ENSG00000203727">
    <property type="expression patterns" value="Expressed in kidney epithelium and 150 other cell types or tissues"/>
</dbReference>
<dbReference type="ExpressionAtlas" id="Q5TGI4">
    <property type="expression patterns" value="baseline and differential"/>
</dbReference>
<dbReference type="GO" id="GO:0005737">
    <property type="term" value="C:cytoplasm"/>
    <property type="evidence" value="ECO:0000314"/>
    <property type="project" value="UniProtKB"/>
</dbReference>
<dbReference type="GO" id="GO:1902531">
    <property type="term" value="P:regulation of intracellular signal transduction"/>
    <property type="evidence" value="ECO:0000318"/>
    <property type="project" value="GO_Central"/>
</dbReference>
<dbReference type="CDD" id="cd09527">
    <property type="entry name" value="SAM_Samd5"/>
    <property type="match status" value="1"/>
</dbReference>
<dbReference type="FunFam" id="1.10.150.50:FF:000055">
    <property type="entry name" value="Sterile alpha motif domain containing 5"/>
    <property type="match status" value="1"/>
</dbReference>
<dbReference type="Gene3D" id="1.10.150.50">
    <property type="entry name" value="Transcription Factor, Ets-1"/>
    <property type="match status" value="1"/>
</dbReference>
<dbReference type="InterPro" id="IPR001660">
    <property type="entry name" value="SAM"/>
</dbReference>
<dbReference type="InterPro" id="IPR051725">
    <property type="entry name" value="SAM-SH3_domain_protein"/>
</dbReference>
<dbReference type="InterPro" id="IPR013761">
    <property type="entry name" value="SAM/pointed_sf"/>
</dbReference>
<dbReference type="PANTHER" id="PTHR12301">
    <property type="entry name" value="SAM-DOMAIN, SH3 AND NUCLEAR LOCALIZATION SIGNALS PROTEIN RELATED"/>
    <property type="match status" value="1"/>
</dbReference>
<dbReference type="PANTHER" id="PTHR12301:SF8">
    <property type="entry name" value="STERILE ALPHA MOTIF DOMAIN-CONTAINING PROTEIN 5"/>
    <property type="match status" value="1"/>
</dbReference>
<dbReference type="Pfam" id="PF00536">
    <property type="entry name" value="SAM_1"/>
    <property type="match status" value="1"/>
</dbReference>
<dbReference type="SMART" id="SM00454">
    <property type="entry name" value="SAM"/>
    <property type="match status" value="1"/>
</dbReference>
<dbReference type="SUPFAM" id="SSF47769">
    <property type="entry name" value="SAM/Pointed domain"/>
    <property type="match status" value="1"/>
</dbReference>
<dbReference type="PROSITE" id="PS50105">
    <property type="entry name" value="SAM_DOMAIN"/>
    <property type="match status" value="1"/>
</dbReference>
<keyword id="KW-0963">Cytoplasm</keyword>
<keyword id="KW-1267">Proteomics identification</keyword>
<keyword id="KW-1185">Reference proteome</keyword>
<evidence type="ECO:0000250" key="1">
    <source>
        <dbReference type="UniProtKB" id="Q3V1H9"/>
    </source>
</evidence>
<evidence type="ECO:0000255" key="2">
    <source>
        <dbReference type="PROSITE-ProRule" id="PRU00184"/>
    </source>
</evidence>
<evidence type="ECO:0000256" key="3">
    <source>
        <dbReference type="SAM" id="MobiDB-lite"/>
    </source>
</evidence>
<evidence type="ECO:0000269" key="4">
    <source>
    </source>
</evidence>